<keyword id="KW-0025">Alternative splicing</keyword>
<keyword id="KW-1015">Disulfide bond</keyword>
<keyword id="KW-0378">Hydrolase</keyword>
<keyword id="KW-0472">Membrane</keyword>
<keyword id="KW-0645">Protease</keyword>
<keyword id="KW-1185">Reference proteome</keyword>
<keyword id="KW-0720">Serine protease</keyword>
<keyword id="KW-0735">Signal-anchor</keyword>
<keyword id="KW-0812">Transmembrane</keyword>
<keyword id="KW-1133">Transmembrane helix</keyword>
<keyword id="KW-0865">Zymogen</keyword>
<evidence type="ECO:0000250" key="1">
    <source>
        <dbReference type="UniProtKB" id="P10144"/>
    </source>
</evidence>
<evidence type="ECO:0000250" key="2">
    <source>
        <dbReference type="UniProtKB" id="P49863"/>
    </source>
</evidence>
<evidence type="ECO:0000255" key="3"/>
<evidence type="ECO:0000255" key="4">
    <source>
        <dbReference type="PROSITE-ProRule" id="PRU00188"/>
    </source>
</evidence>
<evidence type="ECO:0000255" key="5">
    <source>
        <dbReference type="PROSITE-ProRule" id="PRU00274"/>
    </source>
</evidence>
<evidence type="ECO:0000269" key="6">
    <source>
    </source>
</evidence>
<evidence type="ECO:0000303" key="7">
    <source>
    </source>
</evidence>
<evidence type="ECO:0000305" key="8"/>
<evidence type="ECO:0000312" key="9">
    <source>
        <dbReference type="EMBL" id="CAE84986.1"/>
    </source>
</evidence>
<gene>
    <name type="primary">Tmprss11g</name>
    <name type="synonym">Desc4</name>
</gene>
<proteinExistence type="evidence at transcript level"/>
<dbReference type="EC" id="3.4.21.-"/>
<dbReference type="EMBL" id="AJ617481">
    <property type="protein sequence ID" value="CAE84572.1"/>
    <property type="molecule type" value="mRNA"/>
</dbReference>
<dbReference type="EMBL" id="AJ617528">
    <property type="protein sequence ID" value="CAE84986.1"/>
    <property type="molecule type" value="mRNA"/>
</dbReference>
<dbReference type="RefSeq" id="NP_001008554.1">
    <molecule id="Q5QSK2-1"/>
    <property type="nucleotide sequence ID" value="NM_001008554.1"/>
</dbReference>
<dbReference type="SMR" id="Q5QSK2"/>
<dbReference type="FunCoup" id="Q5QSK2">
    <property type="interactions" value="5"/>
</dbReference>
<dbReference type="STRING" id="10116.ENSRNOP00000056857"/>
<dbReference type="MEROPS" id="S01.436"/>
<dbReference type="PaxDb" id="10116-ENSRNOP00000047610"/>
<dbReference type="GeneID" id="289546"/>
<dbReference type="KEGG" id="rno:289546"/>
<dbReference type="UCSC" id="RGD:1306446">
    <molecule id="Q5QSK2-1"/>
    <property type="organism name" value="rat"/>
</dbReference>
<dbReference type="AGR" id="RGD:1306446"/>
<dbReference type="CTD" id="320454"/>
<dbReference type="RGD" id="1306446">
    <property type="gene designation" value="Tmprss11g"/>
</dbReference>
<dbReference type="eggNOG" id="KOG3627">
    <property type="taxonomic scope" value="Eukaryota"/>
</dbReference>
<dbReference type="InParanoid" id="Q5QSK2"/>
<dbReference type="OrthoDB" id="9425590at2759"/>
<dbReference type="PhylomeDB" id="Q5QSK2"/>
<dbReference type="PRO" id="PR:Q5QSK2"/>
<dbReference type="Proteomes" id="UP000002494">
    <property type="component" value="Unplaced"/>
</dbReference>
<dbReference type="GO" id="GO:0005576">
    <property type="term" value="C:extracellular region"/>
    <property type="evidence" value="ECO:0007669"/>
    <property type="project" value="InterPro"/>
</dbReference>
<dbReference type="GO" id="GO:0005886">
    <property type="term" value="C:plasma membrane"/>
    <property type="evidence" value="ECO:0000314"/>
    <property type="project" value="UniProtKB"/>
</dbReference>
<dbReference type="GO" id="GO:0004252">
    <property type="term" value="F:serine-type endopeptidase activity"/>
    <property type="evidence" value="ECO:0007669"/>
    <property type="project" value="InterPro"/>
</dbReference>
<dbReference type="GO" id="GO:0006508">
    <property type="term" value="P:proteolysis"/>
    <property type="evidence" value="ECO:0007669"/>
    <property type="project" value="UniProtKB-KW"/>
</dbReference>
<dbReference type="CDD" id="cd00190">
    <property type="entry name" value="Tryp_SPc"/>
    <property type="match status" value="1"/>
</dbReference>
<dbReference type="FunFam" id="2.40.10.10:FF:000003">
    <property type="entry name" value="Transmembrane serine protease 3"/>
    <property type="match status" value="1"/>
</dbReference>
<dbReference type="Gene3D" id="3.30.70.960">
    <property type="entry name" value="SEA domain"/>
    <property type="match status" value="1"/>
</dbReference>
<dbReference type="Gene3D" id="2.40.10.10">
    <property type="entry name" value="Trypsin-like serine proteases"/>
    <property type="match status" value="2"/>
</dbReference>
<dbReference type="InterPro" id="IPR017329">
    <property type="entry name" value="Pept_S1A_HAT/DESC1"/>
</dbReference>
<dbReference type="InterPro" id="IPR009003">
    <property type="entry name" value="Peptidase_S1_PA"/>
</dbReference>
<dbReference type="InterPro" id="IPR043504">
    <property type="entry name" value="Peptidase_S1_PA_chymotrypsin"/>
</dbReference>
<dbReference type="InterPro" id="IPR001314">
    <property type="entry name" value="Peptidase_S1A"/>
</dbReference>
<dbReference type="InterPro" id="IPR000082">
    <property type="entry name" value="SEA_dom"/>
</dbReference>
<dbReference type="InterPro" id="IPR036364">
    <property type="entry name" value="SEA_dom_sf"/>
</dbReference>
<dbReference type="InterPro" id="IPR001254">
    <property type="entry name" value="Trypsin_dom"/>
</dbReference>
<dbReference type="InterPro" id="IPR033116">
    <property type="entry name" value="TRYPSIN_SER"/>
</dbReference>
<dbReference type="PANTHER" id="PTHR24252">
    <property type="entry name" value="ACROSIN-RELATED"/>
    <property type="match status" value="1"/>
</dbReference>
<dbReference type="PANTHER" id="PTHR24252:SF28">
    <property type="entry name" value="TRANSMEMBRANE PROTEASE SERINE 11C ISOFORM X1"/>
    <property type="match status" value="1"/>
</dbReference>
<dbReference type="Pfam" id="PF01390">
    <property type="entry name" value="SEA"/>
    <property type="match status" value="1"/>
</dbReference>
<dbReference type="Pfam" id="PF00089">
    <property type="entry name" value="Trypsin"/>
    <property type="match status" value="1"/>
</dbReference>
<dbReference type="PIRSF" id="PIRSF037941">
    <property type="entry name" value="TMPRSS11ABCDE"/>
    <property type="match status" value="1"/>
</dbReference>
<dbReference type="PRINTS" id="PR00722">
    <property type="entry name" value="CHYMOTRYPSIN"/>
</dbReference>
<dbReference type="SMART" id="SM00020">
    <property type="entry name" value="Tryp_SPc"/>
    <property type="match status" value="1"/>
</dbReference>
<dbReference type="SUPFAM" id="SSF82671">
    <property type="entry name" value="SEA domain"/>
    <property type="match status" value="1"/>
</dbReference>
<dbReference type="SUPFAM" id="SSF50494">
    <property type="entry name" value="Trypsin-like serine proteases"/>
    <property type="match status" value="1"/>
</dbReference>
<dbReference type="PROSITE" id="PS50024">
    <property type="entry name" value="SEA"/>
    <property type="match status" value="1"/>
</dbReference>
<dbReference type="PROSITE" id="PS50240">
    <property type="entry name" value="TRYPSIN_DOM"/>
    <property type="match status" value="1"/>
</dbReference>
<dbReference type="PROSITE" id="PS00135">
    <property type="entry name" value="TRYPSIN_SER"/>
    <property type="match status" value="1"/>
</dbReference>
<comment type="subcellular location">
    <subcellularLocation>
        <location evidence="6">Membrane</location>
        <topology evidence="6">Single-pass type II membrane protein</topology>
    </subcellularLocation>
</comment>
<comment type="alternative products">
    <event type="alternative splicing"/>
    <isoform>
        <id>Q5QSK2-1</id>
        <name evidence="6">1</name>
        <sequence type="displayed"/>
    </isoform>
    <isoform>
        <id>Q5QSK2-2</id>
        <name evidence="6">2</name>
        <sequence type="described" ref="VSP_014182"/>
    </isoform>
</comment>
<comment type="tissue specificity">
    <text evidence="6">Highest expression in lung and tongue. Also expressed in brain, colon, heart and liver. Isoform 1 is the predominant form in tongue whereas both isoforms are expressed in similar amounts in lung. At the cellular level, expression is confined to epithelial cells within the cleft of the circumvallate papillae extending into the ducts of the minor salivary glands, the respiratory epithelium of the nasal cavity and tear gland ducts.</text>
</comment>
<comment type="similarity">
    <text evidence="5">Belongs to the peptidase S1 family.</text>
</comment>
<organism>
    <name type="scientific">Rattus norvegicus</name>
    <name type="common">Rat</name>
    <dbReference type="NCBI Taxonomy" id="10116"/>
    <lineage>
        <taxon>Eukaryota</taxon>
        <taxon>Metazoa</taxon>
        <taxon>Chordata</taxon>
        <taxon>Craniata</taxon>
        <taxon>Vertebrata</taxon>
        <taxon>Euteleostomi</taxon>
        <taxon>Mammalia</taxon>
        <taxon>Eutheria</taxon>
        <taxon>Euarchontoglires</taxon>
        <taxon>Glires</taxon>
        <taxon>Rodentia</taxon>
        <taxon>Myomorpha</taxon>
        <taxon>Muroidea</taxon>
        <taxon>Muridae</taxon>
        <taxon>Murinae</taxon>
        <taxon>Rattus</taxon>
    </lineage>
</organism>
<sequence length="417" mass="46593">MYQPGILGRRKRVCKPWTVALTTTAALLALAVLIGLLVYFLVYEEKTHYYQASFWIPSIKYSSDLSEEQSKLQINLKQKINNEIDVIFQRSSLKHHYVKSQVVNFRPSNDGVKADILIKFQIPRKNADTLRSEADSILNKKLQSSQSFLKRDISLPYLREMNAAQAEHILNSNCGLGMEYPRIARIADGKPAGSNSWPWQSSLQVEGIHLCGASLIGSQWLVTSAHCFDNYKNPKLWTVSFGRTLGNPLTTRKVESIIIHENYAAHKHDDDIAVVKLSSPVLFSENLRTVCLPEATFQVLPKSKVFVTGWGALKANGPFPNSLQEVEIEIISNDVCNQVNVYGGAISSGMICAGFLTGKLDACEGDSGGPLVISDNRNKWYLLGIVSWGIDCGKENKPGIYTRVTHYRNWIKSKTNI</sequence>
<name>TM11G_RAT</name>
<reference evidence="8 9" key="1">
    <citation type="journal article" date="2004" name="Cell. Mol. Life Sci.">
        <title>Molecular cloning and characterisation of DESC4, a new transmembrane serine protease.</title>
        <authorList>
            <person name="Behrens M."/>
            <person name="Bufe B."/>
            <person name="Schmale H."/>
            <person name="Meyerhof W."/>
        </authorList>
    </citation>
    <scope>NUCLEOTIDE SEQUENCE [MRNA] (ISOFORMS 1 AND 2)</scope>
    <scope>SUBCELLULAR LOCATION</scope>
    <scope>TISSUE SPECIFICITY</scope>
    <source>
        <strain evidence="9">Wistar</strain>
        <tissue>Circumvallate papilla</tissue>
    </source>
</reference>
<accession>Q5QSK2</accession>
<accession>Q5NJM5</accession>
<protein>
    <recommendedName>
        <fullName>Transmembrane protease serine 11G</fullName>
        <ecNumber>3.4.21.-</ecNumber>
    </recommendedName>
    <alternativeName>
        <fullName>Serine protease DESC4</fullName>
    </alternativeName>
    <component>
        <recommendedName>
            <fullName>Transmembrane protease serine 11G non-catalytic chain</fullName>
        </recommendedName>
    </component>
    <component>
        <recommendedName>
            <fullName>Transmembrane protease serine 11G catalytic chain</fullName>
        </recommendedName>
    </component>
</protein>
<feature type="chain" id="PRO_0000027839" description="Transmembrane protease serine 11G non-catalytic chain" evidence="3">
    <location>
        <begin position="1"/>
        <end position="185"/>
    </location>
</feature>
<feature type="chain" id="PRO_0000027840" description="Transmembrane protease serine 11G catalytic chain" evidence="3">
    <location>
        <begin position="186"/>
        <end position="417"/>
    </location>
</feature>
<feature type="topological domain" description="Cytoplasmic" evidence="3">
    <location>
        <begin position="1"/>
        <end position="22"/>
    </location>
</feature>
<feature type="transmembrane region" description="Helical; Signal-anchor for type II membrane protein" evidence="3">
    <location>
        <begin position="23"/>
        <end position="43"/>
    </location>
</feature>
<feature type="topological domain" description="Extracellular" evidence="3">
    <location>
        <begin position="44"/>
        <end position="417"/>
    </location>
</feature>
<feature type="domain" description="SEA" evidence="4">
    <location>
        <begin position="46"/>
        <end position="165"/>
    </location>
</feature>
<feature type="domain" description="Peptidase S1" evidence="5">
    <location>
        <begin position="186"/>
        <end position="416"/>
    </location>
</feature>
<feature type="active site" description="Charge relay system" evidence="1">
    <location>
        <position position="226"/>
    </location>
</feature>
<feature type="active site" description="Charge relay system" evidence="1">
    <location>
        <position position="271"/>
    </location>
</feature>
<feature type="active site" description="Charge relay system" evidence="1">
    <location>
        <position position="367"/>
    </location>
</feature>
<feature type="disulfide bond" evidence="2 5">
    <location>
        <begin position="211"/>
        <end position="227"/>
    </location>
</feature>
<feature type="disulfide bond" evidence="2 5">
    <location>
        <begin position="336"/>
        <end position="352"/>
    </location>
</feature>
<feature type="disulfide bond" evidence="2 5">
    <location>
        <begin position="363"/>
        <end position="392"/>
    </location>
</feature>
<feature type="splice variant" id="VSP_014182" description="In isoform 2." evidence="7">
    <original>EMNAAQAEHILNSN</original>
    <variation>D</variation>
    <location>
        <begin position="160"/>
        <end position="173"/>
    </location>
</feature>